<name>ATPZ_ALKPO</name>
<evidence type="ECO:0000255" key="1"/>
<evidence type="ECO:0000305" key="2"/>
<organism>
    <name type="scientific">Alkalihalophilus pseudofirmus (strain ATCC BAA-2126 / JCM 17055 / OF4)</name>
    <name type="common">Bacillus pseudofirmus</name>
    <dbReference type="NCBI Taxonomy" id="398511"/>
    <lineage>
        <taxon>Bacteria</taxon>
        <taxon>Bacillati</taxon>
        <taxon>Bacillota</taxon>
        <taxon>Bacilli</taxon>
        <taxon>Bacillales</taxon>
        <taxon>Bacillaceae</taxon>
        <taxon>Alkalihalophilus</taxon>
    </lineage>
</organism>
<keyword id="KW-1003">Cell membrane</keyword>
<keyword id="KW-0138">CF(0)</keyword>
<keyword id="KW-0375">Hydrogen ion transport</keyword>
<keyword id="KW-0406">Ion transport</keyword>
<keyword id="KW-0472">Membrane</keyword>
<keyword id="KW-1185">Reference proteome</keyword>
<keyword id="KW-0812">Transmembrane</keyword>
<keyword id="KW-1133">Transmembrane helix</keyword>
<keyword id="KW-0813">Transport</keyword>
<reference key="1">
    <citation type="journal article" date="1991" name="Mol. Gen. Genet.">
        <title>Organization and nucleotide sequence of the atp genes encoding the ATP synthase from alkaliphilic Bacillus firmus OF4.</title>
        <authorList>
            <person name="Ivey D.M."/>
            <person name="Krulwich T.A."/>
        </authorList>
    </citation>
    <scope>NUCLEOTIDE SEQUENCE [GENOMIC DNA]</scope>
</reference>
<reference key="2">
    <citation type="journal article" date="2011" name="Environ. Microbiol.">
        <title>Genome of alkaliphilic Bacillus pseudofirmus OF4 reveals adaptations that support the ability to grow in an external pH range from 7.5 to 11.4.</title>
        <authorList>
            <person name="Janto B."/>
            <person name="Ahmed A."/>
            <person name="Ito M."/>
            <person name="Liu J."/>
            <person name="Hicks D.B."/>
            <person name="Pagni S."/>
            <person name="Fackelmayer O.J."/>
            <person name="Smith T.A."/>
            <person name="Earl J."/>
            <person name="Elbourne L.D."/>
            <person name="Hassan K."/>
            <person name="Paulsen I.T."/>
            <person name="Kolsto A.B."/>
            <person name="Tourasse N.J."/>
            <person name="Ehrlich G.D."/>
            <person name="Boissy R."/>
            <person name="Ivey D.M."/>
            <person name="Li G."/>
            <person name="Xue Y."/>
            <person name="Ma Y."/>
            <person name="Hu F.Z."/>
            <person name="Krulwich T.A."/>
        </authorList>
    </citation>
    <scope>NUCLEOTIDE SEQUENCE [LARGE SCALE GENOMIC DNA]</scope>
    <source>
        <strain>ATCC BAA-2126 / JCM 17055 / OF4</strain>
    </source>
</reference>
<comment type="function">
    <text>A possible function for this protein is to guide the assembly of the membrane sector of the ATPase enzyme complex.</text>
</comment>
<comment type="subcellular location">
    <subcellularLocation>
        <location evidence="2">Cell membrane</location>
        <topology evidence="2">Multi-pass membrane protein</topology>
    </subcellularLocation>
</comment>
<comment type="similarity">
    <text evidence="2">Belongs to the bacterial AtpI family.</text>
</comment>
<feature type="chain" id="PRO_0000071702" description="ATP synthase protein I">
    <location>
        <begin position="1"/>
        <end position="133"/>
    </location>
</feature>
<feature type="transmembrane region" description="Helical" evidence="1">
    <location>
        <begin position="16"/>
        <end position="36"/>
    </location>
</feature>
<feature type="transmembrane region" description="Helical" evidence="1">
    <location>
        <begin position="38"/>
        <end position="58"/>
    </location>
</feature>
<feature type="transmembrane region" description="Helical" evidence="1">
    <location>
        <begin position="74"/>
        <end position="94"/>
    </location>
</feature>
<feature type="transmembrane region" description="Helical" evidence="1">
    <location>
        <begin position="107"/>
        <end position="127"/>
    </location>
</feature>
<proteinExistence type="inferred from homology"/>
<gene>
    <name type="primary">atpI</name>
    <name type="ordered locus">BpOF4_06885</name>
</gene>
<accession>P22475</accession>
<accession>D3G0G0</accession>
<protein>
    <recommendedName>
        <fullName>ATP synthase protein I</fullName>
    </recommendedName>
</protein>
<dbReference type="EMBL" id="AF330160">
    <property type="protein sequence ID" value="AAG48357.1"/>
    <property type="molecule type" value="Genomic_DNA"/>
</dbReference>
<dbReference type="EMBL" id="CP001878">
    <property type="protein sequence ID" value="ADC49435.1"/>
    <property type="molecule type" value="Genomic_DNA"/>
</dbReference>
<dbReference type="RefSeq" id="WP_012960708.1">
    <property type="nucleotide sequence ID" value="NC_013791.2"/>
</dbReference>
<dbReference type="STRING" id="398511.BpOF4_06885"/>
<dbReference type="TCDB" id="1.A.77.3.1">
    <property type="family name" value="the mg(2+)/ca(2+) uniporter (mcu) family"/>
</dbReference>
<dbReference type="KEGG" id="bpf:BpOF4_06885"/>
<dbReference type="HOGENOM" id="CLU_147331_0_0_9"/>
<dbReference type="Proteomes" id="UP000001544">
    <property type="component" value="Chromosome"/>
</dbReference>
<dbReference type="GO" id="GO:0005886">
    <property type="term" value="C:plasma membrane"/>
    <property type="evidence" value="ECO:0007669"/>
    <property type="project" value="UniProtKB-SubCell"/>
</dbReference>
<dbReference type="GO" id="GO:0045259">
    <property type="term" value="C:proton-transporting ATP synthase complex"/>
    <property type="evidence" value="ECO:0007669"/>
    <property type="project" value="UniProtKB-KW"/>
</dbReference>
<dbReference type="GO" id="GO:1902600">
    <property type="term" value="P:proton transmembrane transport"/>
    <property type="evidence" value="ECO:0007669"/>
    <property type="project" value="UniProtKB-KW"/>
</dbReference>
<dbReference type="InterPro" id="IPR005598">
    <property type="entry name" value="ATP_synth_I"/>
</dbReference>
<dbReference type="Pfam" id="PF03899">
    <property type="entry name" value="ATP-synt_I"/>
    <property type="match status" value="1"/>
</dbReference>
<sequence>MSKMSSLQGKMRQHTIIVMTLLFLFITGYLLTQLKVQFLSFFAGLSVSFLNLWTTYYLAKVVGKVADQKRKHSVLPFILAGFGYLIRIVLALSVVYWALINPDTLNVLLVIAGISLIYAIIMLDMLFQFMRKR</sequence>